<evidence type="ECO:0000255" key="1">
    <source>
        <dbReference type="HAMAP-Rule" id="MF_00176"/>
    </source>
</evidence>
<gene>
    <name evidence="1" type="primary">serS</name>
    <name type="ordered locus">BUAP5A_306</name>
</gene>
<proteinExistence type="inferred from homology"/>
<sequence>MLNPYLLRNELHLTAKKLLKKGYKLNISKISSMEEKRKTLQIQTENLQFKHNALSNLFKENKNIKNKNELLRHQVIQSSKDLNASKIELNSLKEKIHHFSMCIPNIPSDDVPEGNTSINNKEIKYWGQKKKYDFEIQDHIELGKKFNELDWKSSAQMSGSRFVIMKGKIALLHRALSQFMLDLHTLKHGYIESYVPYLVHSEALYGTGQLPKFSDDLFHINLTDKKKYILIPTGEVPLTNLVYDQIIDEKDLPIMLTAHTPCFRSEASSYGRDTKGLIRLHQFDKVELVQIVKPEKSYEALEKLTNHAEKVLQLLNLPYRKMLLCTGDTGFAAVKTYDLEVWFPSEKKYREVSSCSNMSDFQARRIKARYRKKSEQKNFFVHTLNGSGLAIGRTLAAILENYQHSNGRIEIPKVLQKKYMQGLEFIN</sequence>
<keyword id="KW-0030">Aminoacyl-tRNA synthetase</keyword>
<keyword id="KW-0067">ATP-binding</keyword>
<keyword id="KW-0963">Cytoplasm</keyword>
<keyword id="KW-0436">Ligase</keyword>
<keyword id="KW-0547">Nucleotide-binding</keyword>
<keyword id="KW-0648">Protein biosynthesis</keyword>
<protein>
    <recommendedName>
        <fullName evidence="1">Serine--tRNA ligase</fullName>
        <ecNumber evidence="1">6.1.1.11</ecNumber>
    </recommendedName>
    <alternativeName>
        <fullName evidence="1">Seryl-tRNA synthetase</fullName>
        <shortName evidence="1">SerRS</shortName>
    </alternativeName>
    <alternativeName>
        <fullName evidence="1">Seryl-tRNA(Ser/Sec) synthetase</fullName>
    </alternativeName>
</protein>
<feature type="chain" id="PRO_1000123876" description="Serine--tRNA ligase">
    <location>
        <begin position="1"/>
        <end position="427"/>
    </location>
</feature>
<feature type="binding site" evidence="1">
    <location>
        <begin position="233"/>
        <end position="235"/>
    </location>
    <ligand>
        <name>L-serine</name>
        <dbReference type="ChEBI" id="CHEBI:33384"/>
    </ligand>
</feature>
<feature type="binding site" evidence="1">
    <location>
        <begin position="264"/>
        <end position="266"/>
    </location>
    <ligand>
        <name>ATP</name>
        <dbReference type="ChEBI" id="CHEBI:30616"/>
    </ligand>
</feature>
<feature type="binding site" evidence="1">
    <location>
        <position position="287"/>
    </location>
    <ligand>
        <name>L-serine</name>
        <dbReference type="ChEBI" id="CHEBI:33384"/>
    </ligand>
</feature>
<feature type="binding site" evidence="1">
    <location>
        <begin position="351"/>
        <end position="354"/>
    </location>
    <ligand>
        <name>ATP</name>
        <dbReference type="ChEBI" id="CHEBI:30616"/>
    </ligand>
</feature>
<feature type="binding site" evidence="1">
    <location>
        <position position="387"/>
    </location>
    <ligand>
        <name>L-serine</name>
        <dbReference type="ChEBI" id="CHEBI:33384"/>
    </ligand>
</feature>
<organism>
    <name type="scientific">Buchnera aphidicola subsp. Acyrthosiphon pisum (strain 5A)</name>
    <dbReference type="NCBI Taxonomy" id="563178"/>
    <lineage>
        <taxon>Bacteria</taxon>
        <taxon>Pseudomonadati</taxon>
        <taxon>Pseudomonadota</taxon>
        <taxon>Gammaproteobacteria</taxon>
        <taxon>Enterobacterales</taxon>
        <taxon>Erwiniaceae</taxon>
        <taxon>Buchnera</taxon>
    </lineage>
</organism>
<accession>B8D9A3</accession>
<name>SYS_BUCA5</name>
<reference key="1">
    <citation type="journal article" date="2009" name="Science">
        <title>The dynamics and time scale of ongoing genomic erosion in symbiotic bacteria.</title>
        <authorList>
            <person name="Moran N.A."/>
            <person name="McLaughlin H.J."/>
            <person name="Sorek R."/>
        </authorList>
    </citation>
    <scope>NUCLEOTIDE SEQUENCE [LARGE SCALE GENOMIC DNA]</scope>
    <source>
        <strain>5A</strain>
    </source>
</reference>
<dbReference type="EC" id="6.1.1.11" evidence="1"/>
<dbReference type="EMBL" id="CP001161">
    <property type="protein sequence ID" value="ACL30674.1"/>
    <property type="molecule type" value="Genomic_DNA"/>
</dbReference>
<dbReference type="RefSeq" id="WP_009874267.1">
    <property type="nucleotide sequence ID" value="NC_011833.1"/>
</dbReference>
<dbReference type="SMR" id="B8D9A3"/>
<dbReference type="KEGG" id="bap:BUAP5A_306"/>
<dbReference type="HOGENOM" id="CLU_023797_0_1_6"/>
<dbReference type="OrthoDB" id="9804647at2"/>
<dbReference type="UniPathway" id="UPA00906">
    <property type="reaction ID" value="UER00895"/>
</dbReference>
<dbReference type="Proteomes" id="UP000006904">
    <property type="component" value="Chromosome"/>
</dbReference>
<dbReference type="GO" id="GO:0005737">
    <property type="term" value="C:cytoplasm"/>
    <property type="evidence" value="ECO:0007669"/>
    <property type="project" value="UniProtKB-SubCell"/>
</dbReference>
<dbReference type="GO" id="GO:0005524">
    <property type="term" value="F:ATP binding"/>
    <property type="evidence" value="ECO:0007669"/>
    <property type="project" value="UniProtKB-UniRule"/>
</dbReference>
<dbReference type="GO" id="GO:0004828">
    <property type="term" value="F:serine-tRNA ligase activity"/>
    <property type="evidence" value="ECO:0007669"/>
    <property type="project" value="UniProtKB-UniRule"/>
</dbReference>
<dbReference type="GO" id="GO:0016260">
    <property type="term" value="P:selenocysteine biosynthetic process"/>
    <property type="evidence" value="ECO:0007669"/>
    <property type="project" value="UniProtKB-UniRule"/>
</dbReference>
<dbReference type="GO" id="GO:0006434">
    <property type="term" value="P:seryl-tRNA aminoacylation"/>
    <property type="evidence" value="ECO:0007669"/>
    <property type="project" value="UniProtKB-UniRule"/>
</dbReference>
<dbReference type="CDD" id="cd00770">
    <property type="entry name" value="SerRS_core"/>
    <property type="match status" value="1"/>
</dbReference>
<dbReference type="Gene3D" id="3.30.930.10">
    <property type="entry name" value="Bira Bifunctional Protein, Domain 2"/>
    <property type="match status" value="1"/>
</dbReference>
<dbReference type="Gene3D" id="1.10.287.40">
    <property type="entry name" value="Serine-tRNA synthetase, tRNA binding domain"/>
    <property type="match status" value="1"/>
</dbReference>
<dbReference type="HAMAP" id="MF_00176">
    <property type="entry name" value="Ser_tRNA_synth_type1"/>
    <property type="match status" value="1"/>
</dbReference>
<dbReference type="InterPro" id="IPR002314">
    <property type="entry name" value="aa-tRNA-synt_IIb"/>
</dbReference>
<dbReference type="InterPro" id="IPR006195">
    <property type="entry name" value="aa-tRNA-synth_II"/>
</dbReference>
<dbReference type="InterPro" id="IPR045864">
    <property type="entry name" value="aa-tRNA-synth_II/BPL/LPL"/>
</dbReference>
<dbReference type="InterPro" id="IPR002317">
    <property type="entry name" value="Ser-tRNA-ligase_type_1"/>
</dbReference>
<dbReference type="InterPro" id="IPR015866">
    <property type="entry name" value="Ser-tRNA-synth_1_N"/>
</dbReference>
<dbReference type="InterPro" id="IPR042103">
    <property type="entry name" value="SerRS_1_N_sf"/>
</dbReference>
<dbReference type="InterPro" id="IPR033729">
    <property type="entry name" value="SerRS_core"/>
</dbReference>
<dbReference type="InterPro" id="IPR010978">
    <property type="entry name" value="tRNA-bd_arm"/>
</dbReference>
<dbReference type="NCBIfam" id="TIGR00414">
    <property type="entry name" value="serS"/>
    <property type="match status" value="1"/>
</dbReference>
<dbReference type="PANTHER" id="PTHR43697:SF1">
    <property type="entry name" value="SERINE--TRNA LIGASE"/>
    <property type="match status" value="1"/>
</dbReference>
<dbReference type="PANTHER" id="PTHR43697">
    <property type="entry name" value="SERYL-TRNA SYNTHETASE"/>
    <property type="match status" value="1"/>
</dbReference>
<dbReference type="Pfam" id="PF02403">
    <property type="entry name" value="Seryl_tRNA_N"/>
    <property type="match status" value="1"/>
</dbReference>
<dbReference type="Pfam" id="PF00587">
    <property type="entry name" value="tRNA-synt_2b"/>
    <property type="match status" value="1"/>
</dbReference>
<dbReference type="PIRSF" id="PIRSF001529">
    <property type="entry name" value="Ser-tRNA-synth_IIa"/>
    <property type="match status" value="1"/>
</dbReference>
<dbReference type="PRINTS" id="PR00981">
    <property type="entry name" value="TRNASYNTHSER"/>
</dbReference>
<dbReference type="SUPFAM" id="SSF55681">
    <property type="entry name" value="Class II aaRS and biotin synthetases"/>
    <property type="match status" value="1"/>
</dbReference>
<dbReference type="SUPFAM" id="SSF46589">
    <property type="entry name" value="tRNA-binding arm"/>
    <property type="match status" value="1"/>
</dbReference>
<dbReference type="PROSITE" id="PS50862">
    <property type="entry name" value="AA_TRNA_LIGASE_II"/>
    <property type="match status" value="1"/>
</dbReference>
<comment type="function">
    <text evidence="1">Catalyzes the attachment of serine to tRNA(Ser). Is also able to aminoacylate tRNA(Sec) with serine, to form the misacylated tRNA L-seryl-tRNA(Sec), which will be further converted into selenocysteinyl-tRNA(Sec).</text>
</comment>
<comment type="catalytic activity">
    <reaction evidence="1">
        <text>tRNA(Ser) + L-serine + ATP = L-seryl-tRNA(Ser) + AMP + diphosphate + H(+)</text>
        <dbReference type="Rhea" id="RHEA:12292"/>
        <dbReference type="Rhea" id="RHEA-COMP:9669"/>
        <dbReference type="Rhea" id="RHEA-COMP:9703"/>
        <dbReference type="ChEBI" id="CHEBI:15378"/>
        <dbReference type="ChEBI" id="CHEBI:30616"/>
        <dbReference type="ChEBI" id="CHEBI:33019"/>
        <dbReference type="ChEBI" id="CHEBI:33384"/>
        <dbReference type="ChEBI" id="CHEBI:78442"/>
        <dbReference type="ChEBI" id="CHEBI:78533"/>
        <dbReference type="ChEBI" id="CHEBI:456215"/>
        <dbReference type="EC" id="6.1.1.11"/>
    </reaction>
</comment>
<comment type="catalytic activity">
    <reaction evidence="1">
        <text>tRNA(Sec) + L-serine + ATP = L-seryl-tRNA(Sec) + AMP + diphosphate + H(+)</text>
        <dbReference type="Rhea" id="RHEA:42580"/>
        <dbReference type="Rhea" id="RHEA-COMP:9742"/>
        <dbReference type="Rhea" id="RHEA-COMP:10128"/>
        <dbReference type="ChEBI" id="CHEBI:15378"/>
        <dbReference type="ChEBI" id="CHEBI:30616"/>
        <dbReference type="ChEBI" id="CHEBI:33019"/>
        <dbReference type="ChEBI" id="CHEBI:33384"/>
        <dbReference type="ChEBI" id="CHEBI:78442"/>
        <dbReference type="ChEBI" id="CHEBI:78533"/>
        <dbReference type="ChEBI" id="CHEBI:456215"/>
        <dbReference type="EC" id="6.1.1.11"/>
    </reaction>
</comment>
<comment type="pathway">
    <text evidence="1">Aminoacyl-tRNA biosynthesis; selenocysteinyl-tRNA(Sec) biosynthesis; L-seryl-tRNA(Sec) from L-serine and tRNA(Sec): step 1/1.</text>
</comment>
<comment type="subunit">
    <text evidence="1">Homodimer. The tRNA molecule binds across the dimer.</text>
</comment>
<comment type="subcellular location">
    <subcellularLocation>
        <location evidence="1">Cytoplasm</location>
    </subcellularLocation>
</comment>
<comment type="domain">
    <text evidence="1">Consists of two distinct domains, a catalytic core and a N-terminal extension that is involved in tRNA binding.</text>
</comment>
<comment type="similarity">
    <text evidence="1">Belongs to the class-II aminoacyl-tRNA synthetase family. Type-1 seryl-tRNA synthetase subfamily.</text>
</comment>